<dbReference type="EMBL" id="AP002971">
    <property type="protein sequence ID" value="BAB39294.1"/>
    <property type="molecule type" value="Genomic_DNA"/>
</dbReference>
<dbReference type="EMBL" id="AP008207">
    <property type="protein sequence ID" value="BAF04829.1"/>
    <property type="molecule type" value="Genomic_DNA"/>
</dbReference>
<dbReference type="EMBL" id="AP014957">
    <property type="protein sequence ID" value="BAS71893.1"/>
    <property type="molecule type" value="Genomic_DNA"/>
</dbReference>
<dbReference type="EMBL" id="CM000138">
    <property type="protein sequence ID" value="EAZ11698.1"/>
    <property type="molecule type" value="Genomic_DNA"/>
</dbReference>
<dbReference type="EMBL" id="AK061988">
    <property type="protein sequence ID" value="BAG88191.1"/>
    <property type="molecule type" value="mRNA"/>
</dbReference>
<dbReference type="RefSeq" id="XP_015621791.1">
    <property type="nucleotide sequence ID" value="XM_015766305.1"/>
</dbReference>
<dbReference type="SMR" id="Q9ARZ9"/>
<dbReference type="FunCoup" id="Q9ARZ9">
    <property type="interactions" value="2232"/>
</dbReference>
<dbReference type="STRING" id="39947.Q9ARZ9"/>
<dbReference type="PaxDb" id="39947-Q9ARZ9"/>
<dbReference type="EnsemblPlants" id="Os01t0328400-01">
    <property type="protein sequence ID" value="Os01t0328400-01"/>
    <property type="gene ID" value="Os01g0328400"/>
</dbReference>
<dbReference type="Gramene" id="Os01t0328400-01">
    <property type="protein sequence ID" value="Os01t0328400-01"/>
    <property type="gene ID" value="Os01g0328400"/>
</dbReference>
<dbReference type="KEGG" id="dosa:Os01g0328400"/>
<dbReference type="eggNOG" id="KOG0004">
    <property type="taxonomic scope" value="Eukaryota"/>
</dbReference>
<dbReference type="HOGENOM" id="CLU_010412_2_0_1"/>
<dbReference type="InParanoid" id="Q9ARZ9"/>
<dbReference type="OMA" id="GVFMAFH"/>
<dbReference type="OrthoDB" id="1649877at2759"/>
<dbReference type="Proteomes" id="UP000000763">
    <property type="component" value="Chromosome 1"/>
</dbReference>
<dbReference type="Proteomes" id="UP000007752">
    <property type="component" value="Chromosome 1"/>
</dbReference>
<dbReference type="Proteomes" id="UP000059680">
    <property type="component" value="Chromosome 1"/>
</dbReference>
<dbReference type="GO" id="GO:0005737">
    <property type="term" value="C:cytoplasm"/>
    <property type="evidence" value="ECO:0000318"/>
    <property type="project" value="GO_Central"/>
</dbReference>
<dbReference type="GO" id="GO:0005634">
    <property type="term" value="C:nucleus"/>
    <property type="evidence" value="ECO:0000318"/>
    <property type="project" value="GO_Central"/>
</dbReference>
<dbReference type="GO" id="GO:0009536">
    <property type="term" value="C:plastid"/>
    <property type="evidence" value="ECO:0007669"/>
    <property type="project" value="UniProtKB-ARBA"/>
</dbReference>
<dbReference type="GO" id="GO:1990904">
    <property type="term" value="C:ribonucleoprotein complex"/>
    <property type="evidence" value="ECO:0007669"/>
    <property type="project" value="UniProtKB-KW"/>
</dbReference>
<dbReference type="GO" id="GO:0005840">
    <property type="term" value="C:ribosome"/>
    <property type="evidence" value="ECO:0007669"/>
    <property type="project" value="UniProtKB-KW"/>
</dbReference>
<dbReference type="GO" id="GO:0003729">
    <property type="term" value="F:mRNA binding"/>
    <property type="evidence" value="ECO:0007669"/>
    <property type="project" value="UniProtKB-ARBA"/>
</dbReference>
<dbReference type="GO" id="GO:0031386">
    <property type="term" value="F:protein tag activity"/>
    <property type="evidence" value="ECO:0000318"/>
    <property type="project" value="GO_Central"/>
</dbReference>
<dbReference type="GO" id="GO:0003735">
    <property type="term" value="F:structural constituent of ribosome"/>
    <property type="evidence" value="ECO:0007669"/>
    <property type="project" value="InterPro"/>
</dbReference>
<dbReference type="GO" id="GO:0031625">
    <property type="term" value="F:ubiquitin protein ligase binding"/>
    <property type="evidence" value="ECO:0000318"/>
    <property type="project" value="GO_Central"/>
</dbReference>
<dbReference type="GO" id="GO:0008270">
    <property type="term" value="F:zinc ion binding"/>
    <property type="evidence" value="ECO:0007669"/>
    <property type="project" value="UniProtKB-KW"/>
</dbReference>
<dbReference type="GO" id="GO:0019941">
    <property type="term" value="P:modification-dependent protein catabolic process"/>
    <property type="evidence" value="ECO:0000318"/>
    <property type="project" value="GO_Central"/>
</dbReference>
<dbReference type="GO" id="GO:0016567">
    <property type="term" value="P:protein ubiquitination"/>
    <property type="evidence" value="ECO:0000318"/>
    <property type="project" value="GO_Central"/>
</dbReference>
<dbReference type="GO" id="GO:0006412">
    <property type="term" value="P:translation"/>
    <property type="evidence" value="ECO:0007669"/>
    <property type="project" value="InterPro"/>
</dbReference>
<dbReference type="CDD" id="cd01803">
    <property type="entry name" value="Ubl_ubiquitin"/>
    <property type="match status" value="1"/>
</dbReference>
<dbReference type="FunFam" id="3.10.20.90:FF:000008">
    <property type="entry name" value="Ubiquitin-40S ribosomal protein S27a"/>
    <property type="match status" value="1"/>
</dbReference>
<dbReference type="Gene3D" id="6.20.50.150">
    <property type="match status" value="1"/>
</dbReference>
<dbReference type="Gene3D" id="3.10.20.90">
    <property type="entry name" value="Phosphatidylinositol 3-kinase Catalytic Subunit, Chain A, domain 1"/>
    <property type="match status" value="1"/>
</dbReference>
<dbReference type="InterPro" id="IPR002906">
    <property type="entry name" value="Ribosomal_eS31"/>
</dbReference>
<dbReference type="InterPro" id="IPR038582">
    <property type="entry name" value="Ribosomal_eS31_euk-type_sf"/>
</dbReference>
<dbReference type="InterPro" id="IPR011332">
    <property type="entry name" value="Ribosomal_zn-bd"/>
</dbReference>
<dbReference type="InterPro" id="IPR000626">
    <property type="entry name" value="Ubiquitin-like_dom"/>
</dbReference>
<dbReference type="InterPro" id="IPR029071">
    <property type="entry name" value="Ubiquitin-like_domsf"/>
</dbReference>
<dbReference type="InterPro" id="IPR019954">
    <property type="entry name" value="Ubiquitin_CS"/>
</dbReference>
<dbReference type="InterPro" id="IPR019956">
    <property type="entry name" value="Ubiquitin_dom"/>
</dbReference>
<dbReference type="InterPro" id="IPR050158">
    <property type="entry name" value="Ubiquitin_ubiquitin-like"/>
</dbReference>
<dbReference type="PANTHER" id="PTHR10666">
    <property type="entry name" value="UBIQUITIN"/>
    <property type="match status" value="1"/>
</dbReference>
<dbReference type="Pfam" id="PF01599">
    <property type="entry name" value="Ribosomal_S27"/>
    <property type="match status" value="1"/>
</dbReference>
<dbReference type="Pfam" id="PF00240">
    <property type="entry name" value="ubiquitin"/>
    <property type="match status" value="1"/>
</dbReference>
<dbReference type="PRINTS" id="PR00348">
    <property type="entry name" value="UBIQUITIN"/>
</dbReference>
<dbReference type="SMART" id="SM01402">
    <property type="entry name" value="Ribosomal_S27"/>
    <property type="match status" value="1"/>
</dbReference>
<dbReference type="SMART" id="SM00213">
    <property type="entry name" value="UBQ"/>
    <property type="match status" value="1"/>
</dbReference>
<dbReference type="SUPFAM" id="SSF54236">
    <property type="entry name" value="Ubiquitin-like"/>
    <property type="match status" value="1"/>
</dbReference>
<dbReference type="SUPFAM" id="SSF57829">
    <property type="entry name" value="Zn-binding ribosomal proteins"/>
    <property type="match status" value="1"/>
</dbReference>
<dbReference type="PROSITE" id="PS00299">
    <property type="entry name" value="UBIQUITIN_1"/>
    <property type="match status" value="1"/>
</dbReference>
<dbReference type="PROSITE" id="PS50053">
    <property type="entry name" value="UBIQUITIN_2"/>
    <property type="match status" value="1"/>
</dbReference>
<keyword id="KW-0963">Cytoplasm</keyword>
<keyword id="KW-1017">Isopeptide bond</keyword>
<keyword id="KW-0479">Metal-binding</keyword>
<keyword id="KW-0539">Nucleus</keyword>
<keyword id="KW-1185">Reference proteome</keyword>
<keyword id="KW-0687">Ribonucleoprotein</keyword>
<keyword id="KW-0689">Ribosomal protein</keyword>
<keyword id="KW-0832">Ubl conjugation</keyword>
<keyword id="KW-0862">Zinc</keyword>
<keyword id="KW-0863">Zinc-finger</keyword>
<protein>
    <recommendedName>
        <fullName evidence="3">Ubiquitin-ribosomal protein eS31z fusion protein</fullName>
    </recommendedName>
    <component>
        <recommendedName>
            <fullName>Ubiquitin</fullName>
        </recommendedName>
    </component>
    <component>
        <recommendedName>
            <fullName evidence="3">Small ribosomal subunit protein eS31z</fullName>
        </recommendedName>
        <alternativeName>
            <fullName>40S ribosomal protein S27a-1</fullName>
        </alternativeName>
    </component>
</protein>
<sequence length="155" mass="17669">MQIFVKTLTGKTITLEVESSDTIDNVKAKIQDKEGIPPDQQRLIFAGKQLEDGRTLADYNIQKESTLHLVLRLRGGAKKRKKKTYTKPKKQKHKHKKVKLAVLQFYKVDDATGKVTRLRKECPNAECGAGTFMANHFDRHYCGKCGLTYVYNQQA</sequence>
<evidence type="ECO:0000250" key="1"/>
<evidence type="ECO:0000255" key="2">
    <source>
        <dbReference type="PROSITE-ProRule" id="PRU00214"/>
    </source>
</evidence>
<evidence type="ECO:0000305" key="3"/>
<reference key="1">
    <citation type="journal article" date="2002" name="Nature">
        <title>The genome sequence and structure of rice chromosome 1.</title>
        <authorList>
            <person name="Sasaki T."/>
            <person name="Matsumoto T."/>
            <person name="Yamamoto K."/>
            <person name="Sakata K."/>
            <person name="Baba T."/>
            <person name="Katayose Y."/>
            <person name="Wu J."/>
            <person name="Niimura Y."/>
            <person name="Cheng Z."/>
            <person name="Nagamura Y."/>
            <person name="Antonio B.A."/>
            <person name="Kanamori H."/>
            <person name="Hosokawa S."/>
            <person name="Masukawa M."/>
            <person name="Arikawa K."/>
            <person name="Chiden Y."/>
            <person name="Hayashi M."/>
            <person name="Okamoto M."/>
            <person name="Ando T."/>
            <person name="Aoki H."/>
            <person name="Arita K."/>
            <person name="Hamada M."/>
            <person name="Harada C."/>
            <person name="Hijishita S."/>
            <person name="Honda M."/>
            <person name="Ichikawa Y."/>
            <person name="Idonuma A."/>
            <person name="Iijima M."/>
            <person name="Ikeda M."/>
            <person name="Ikeno M."/>
            <person name="Ito S."/>
            <person name="Ito T."/>
            <person name="Ito Y."/>
            <person name="Ito Y."/>
            <person name="Iwabuchi A."/>
            <person name="Kamiya K."/>
            <person name="Karasawa W."/>
            <person name="Katagiri S."/>
            <person name="Kikuta A."/>
            <person name="Kobayashi N."/>
            <person name="Kono I."/>
            <person name="Machita K."/>
            <person name="Maehara T."/>
            <person name="Mizuno H."/>
            <person name="Mizubayashi T."/>
            <person name="Mukai Y."/>
            <person name="Nagasaki H."/>
            <person name="Nakashima M."/>
            <person name="Nakama Y."/>
            <person name="Nakamichi Y."/>
            <person name="Nakamura M."/>
            <person name="Namiki N."/>
            <person name="Negishi M."/>
            <person name="Ohta I."/>
            <person name="Ono N."/>
            <person name="Saji S."/>
            <person name="Sakai K."/>
            <person name="Shibata M."/>
            <person name="Shimokawa T."/>
            <person name="Shomura A."/>
            <person name="Song J."/>
            <person name="Takazaki Y."/>
            <person name="Terasawa K."/>
            <person name="Tsuji K."/>
            <person name="Waki K."/>
            <person name="Yamagata H."/>
            <person name="Yamane H."/>
            <person name="Yoshiki S."/>
            <person name="Yoshihara R."/>
            <person name="Yukawa K."/>
            <person name="Zhong H."/>
            <person name="Iwama H."/>
            <person name="Endo T."/>
            <person name="Ito H."/>
            <person name="Hahn J.H."/>
            <person name="Kim H.-I."/>
            <person name="Eun M.-Y."/>
            <person name="Yano M."/>
            <person name="Jiang J."/>
            <person name="Gojobori T."/>
        </authorList>
    </citation>
    <scope>NUCLEOTIDE SEQUENCE [LARGE SCALE GENOMIC DNA]</scope>
    <source>
        <strain>cv. Nipponbare</strain>
    </source>
</reference>
<reference key="2">
    <citation type="journal article" date="2005" name="Nature">
        <title>The map-based sequence of the rice genome.</title>
        <authorList>
            <consortium name="International rice genome sequencing project (IRGSP)"/>
        </authorList>
    </citation>
    <scope>NUCLEOTIDE SEQUENCE [LARGE SCALE GENOMIC DNA]</scope>
    <source>
        <strain>cv. Nipponbare</strain>
    </source>
</reference>
<reference key="3">
    <citation type="journal article" date="2008" name="Nucleic Acids Res.">
        <title>The rice annotation project database (RAP-DB): 2008 update.</title>
        <authorList>
            <consortium name="The rice annotation project (RAP)"/>
        </authorList>
    </citation>
    <scope>GENOME REANNOTATION</scope>
    <source>
        <strain>cv. Nipponbare</strain>
    </source>
</reference>
<reference key="4">
    <citation type="journal article" date="2013" name="Rice">
        <title>Improvement of the Oryza sativa Nipponbare reference genome using next generation sequence and optical map data.</title>
        <authorList>
            <person name="Kawahara Y."/>
            <person name="de la Bastide M."/>
            <person name="Hamilton J.P."/>
            <person name="Kanamori H."/>
            <person name="McCombie W.R."/>
            <person name="Ouyang S."/>
            <person name="Schwartz D.C."/>
            <person name="Tanaka T."/>
            <person name="Wu J."/>
            <person name="Zhou S."/>
            <person name="Childs K.L."/>
            <person name="Davidson R.M."/>
            <person name="Lin H."/>
            <person name="Quesada-Ocampo L."/>
            <person name="Vaillancourt B."/>
            <person name="Sakai H."/>
            <person name="Lee S.S."/>
            <person name="Kim J."/>
            <person name="Numa H."/>
            <person name="Itoh T."/>
            <person name="Buell C.R."/>
            <person name="Matsumoto T."/>
        </authorList>
    </citation>
    <scope>GENOME REANNOTATION</scope>
    <source>
        <strain>cv. Nipponbare</strain>
    </source>
</reference>
<reference key="5">
    <citation type="journal article" date="2005" name="PLoS Biol.">
        <title>The genomes of Oryza sativa: a history of duplications.</title>
        <authorList>
            <person name="Yu J."/>
            <person name="Wang J."/>
            <person name="Lin W."/>
            <person name="Li S."/>
            <person name="Li H."/>
            <person name="Zhou J."/>
            <person name="Ni P."/>
            <person name="Dong W."/>
            <person name="Hu S."/>
            <person name="Zeng C."/>
            <person name="Zhang J."/>
            <person name="Zhang Y."/>
            <person name="Li R."/>
            <person name="Xu Z."/>
            <person name="Li S."/>
            <person name="Li X."/>
            <person name="Zheng H."/>
            <person name="Cong L."/>
            <person name="Lin L."/>
            <person name="Yin J."/>
            <person name="Geng J."/>
            <person name="Li G."/>
            <person name="Shi J."/>
            <person name="Liu J."/>
            <person name="Lv H."/>
            <person name="Li J."/>
            <person name="Wang J."/>
            <person name="Deng Y."/>
            <person name="Ran L."/>
            <person name="Shi X."/>
            <person name="Wang X."/>
            <person name="Wu Q."/>
            <person name="Li C."/>
            <person name="Ren X."/>
            <person name="Wang J."/>
            <person name="Wang X."/>
            <person name="Li D."/>
            <person name="Liu D."/>
            <person name="Zhang X."/>
            <person name="Ji Z."/>
            <person name="Zhao W."/>
            <person name="Sun Y."/>
            <person name="Zhang Z."/>
            <person name="Bao J."/>
            <person name="Han Y."/>
            <person name="Dong L."/>
            <person name="Ji J."/>
            <person name="Chen P."/>
            <person name="Wu S."/>
            <person name="Liu J."/>
            <person name="Xiao Y."/>
            <person name="Bu D."/>
            <person name="Tan J."/>
            <person name="Yang L."/>
            <person name="Ye C."/>
            <person name="Zhang J."/>
            <person name="Xu J."/>
            <person name="Zhou Y."/>
            <person name="Yu Y."/>
            <person name="Zhang B."/>
            <person name="Zhuang S."/>
            <person name="Wei H."/>
            <person name="Liu B."/>
            <person name="Lei M."/>
            <person name="Yu H."/>
            <person name="Li Y."/>
            <person name="Xu H."/>
            <person name="Wei S."/>
            <person name="He X."/>
            <person name="Fang L."/>
            <person name="Zhang Z."/>
            <person name="Zhang Y."/>
            <person name="Huang X."/>
            <person name="Su Z."/>
            <person name="Tong W."/>
            <person name="Li J."/>
            <person name="Tong Z."/>
            <person name="Li S."/>
            <person name="Ye J."/>
            <person name="Wang L."/>
            <person name="Fang L."/>
            <person name="Lei T."/>
            <person name="Chen C.-S."/>
            <person name="Chen H.-C."/>
            <person name="Xu Z."/>
            <person name="Li H."/>
            <person name="Huang H."/>
            <person name="Zhang F."/>
            <person name="Xu H."/>
            <person name="Li N."/>
            <person name="Zhao C."/>
            <person name="Li S."/>
            <person name="Dong L."/>
            <person name="Huang Y."/>
            <person name="Li L."/>
            <person name="Xi Y."/>
            <person name="Qi Q."/>
            <person name="Li W."/>
            <person name="Zhang B."/>
            <person name="Hu W."/>
            <person name="Zhang Y."/>
            <person name="Tian X."/>
            <person name="Jiao Y."/>
            <person name="Liang X."/>
            <person name="Jin J."/>
            <person name="Gao L."/>
            <person name="Zheng W."/>
            <person name="Hao B."/>
            <person name="Liu S.-M."/>
            <person name="Wang W."/>
            <person name="Yuan L."/>
            <person name="Cao M."/>
            <person name="McDermott J."/>
            <person name="Samudrala R."/>
            <person name="Wang J."/>
            <person name="Wong G.K.-S."/>
            <person name="Yang H."/>
        </authorList>
    </citation>
    <scope>NUCLEOTIDE SEQUENCE [LARGE SCALE GENOMIC DNA]</scope>
    <source>
        <strain>cv. Nipponbare</strain>
    </source>
</reference>
<reference key="6">
    <citation type="journal article" date="2003" name="Science">
        <title>Collection, mapping, and annotation of over 28,000 cDNA clones from japonica rice.</title>
        <authorList>
            <consortium name="The rice full-length cDNA consortium"/>
        </authorList>
    </citation>
    <scope>NUCLEOTIDE SEQUENCE [LARGE SCALE MRNA]</scope>
    <source>
        <strain>cv. Nipponbare</strain>
    </source>
</reference>
<organism>
    <name type="scientific">Oryza sativa subsp. japonica</name>
    <name type="common">Rice</name>
    <dbReference type="NCBI Taxonomy" id="39947"/>
    <lineage>
        <taxon>Eukaryota</taxon>
        <taxon>Viridiplantae</taxon>
        <taxon>Streptophyta</taxon>
        <taxon>Embryophyta</taxon>
        <taxon>Tracheophyta</taxon>
        <taxon>Spermatophyta</taxon>
        <taxon>Magnoliopsida</taxon>
        <taxon>Liliopsida</taxon>
        <taxon>Poales</taxon>
        <taxon>Poaceae</taxon>
        <taxon>BOP clade</taxon>
        <taxon>Oryzoideae</taxon>
        <taxon>Oryzeae</taxon>
        <taxon>Oryzinae</taxon>
        <taxon>Oryza</taxon>
        <taxon>Oryza sativa</taxon>
    </lineage>
</organism>
<feature type="chain" id="PRO_0000396874" description="Ubiquitin">
    <location>
        <begin position="1"/>
        <end position="76"/>
    </location>
</feature>
<feature type="chain" id="PRO_0000396875" description="Small ribosomal subunit protein eS31z">
    <location>
        <begin position="77"/>
        <end position="155"/>
    </location>
</feature>
<feature type="zinc finger region" description="C4-type">
    <location>
        <begin position="122"/>
        <end position="145"/>
    </location>
</feature>
<feature type="cross-link" description="Glycyl lysine isopeptide (Lys-Gly) (interchain with G-Cter in ubiquitin)" evidence="1">
    <location>
        <position position="48"/>
    </location>
</feature>
<feature type="cross-link" description="Glycyl lysine isopeptide (Lys-Gly) (interchain with G-Cter in ubiquitin)" evidence="1">
    <location>
        <position position="63"/>
    </location>
</feature>
<feature type="cross-link" description="Glycyl lysine isopeptide (Gly-Lys) (interchain with K-? in acceptor proteins)" evidence="2">
    <location>
        <position position="76"/>
    </location>
</feature>
<gene>
    <name type="primary">RPS27AA</name>
    <name type="ordered locus">Os01g0328400</name>
    <name type="ordered locus">LOC_Os01g22490</name>
    <name type="ORF">OsJ_01558</name>
    <name type="ORF">P0537A05.41</name>
</gene>
<comment type="function">
    <molecule>Ubiquitin</molecule>
    <text evidence="1">Exists either covalently attached to another protein, or free (unanchored). When covalently bound, it is conjugated to target proteins via an isopeptide bond either as a monomer (monoubiquitin), a polymer linked via different Lys residues of the ubiquitin (polyubiquitin chains) or a linear polymer linked via the initiator Met of the ubiquitin (linear polyubiquitin chains). Polyubiquitin chains, when attached to a target protein, have different functions depending on the Lys residue of the ubiquitin that is linked: Lys-48-linked is involved in protein degradation via the proteasome; Lys-63-linked is involved in endocytosis, and DNA-damage responses. Linear polymer chains formed via attachment by the initiator Met lead to cell signaling. Ubiquitin is usually conjugated to Lys residues of target proteins, however, in rare cases, conjugation to Cys or Ser residues has been observed. When polyubiquitin is free (unanchored-polyubiquitin), it also has distinct roles, such as in activation of protein kinases, and in signaling (By similarity).</text>
</comment>
<comment type="function">
    <molecule>Small ribosomal subunit protein eS31z</molecule>
    <text>Component of the 40S subunit of the ribosome.</text>
</comment>
<comment type="subunit">
    <molecule>Small ribosomal subunit protein eS31z</molecule>
    <text evidence="1">Part of the 40S ribosomal subunit.</text>
</comment>
<comment type="subcellular location">
    <molecule>Ubiquitin</molecule>
    <subcellularLocation>
        <location evidence="1">Cytoplasm</location>
    </subcellularLocation>
    <subcellularLocation>
        <location evidence="1">Nucleus</location>
    </subcellularLocation>
</comment>
<comment type="miscellaneous">
    <text>Ubiquitin is generally synthesized as a polyubiquitin precursor with tandem head to tail repeats. Often, there are one to three additional amino acids after the last repeat, removed in the mature protein. Alternatively, ubiquitin extension protein is synthesized as a single copy of ubiquitin fused to a ribosomal protein (either eL40 or eS31) or to an ubiquitin-related protein (either RUB1 or RUB2). Following translation, extension protein is cleaved from ubiquitin.</text>
</comment>
<comment type="similarity">
    <text evidence="3">In the N-terminal section; belongs to the ubiquitin family.</text>
</comment>
<comment type="similarity">
    <text evidence="3">In the C-terminal section; belongs to the eukaryotic ribosomal protein eS31 family.</text>
</comment>
<accession>Q9ARZ9</accession>
<accession>A0A0P0V2H9</accession>
<accession>O82079</accession>
<accession>P03993</accession>
<accession>P69321</accession>
<accession>Q652Q2</accession>
<accession>Q67UR4</accession>
<accession>Q69P70</accession>
<accession>Q6ATC2</accession>
<accession>Q7XN78</accession>
<accession>Q8S5Y3</accession>
<accession>Q9AR09</accession>
<name>R27AA_ORYSJ</name>
<proteinExistence type="evidence at transcript level"/>